<feature type="signal peptide" evidence="3">
    <location>
        <begin position="1"/>
        <end position="29"/>
    </location>
</feature>
<feature type="propeptide" id="PRO_0000460460" evidence="3">
    <location>
        <begin position="30"/>
        <end position="51"/>
    </location>
</feature>
<feature type="chain" id="PRO_5035034059" description="Cadherin-5" evidence="3">
    <location>
        <begin position="52"/>
        <end position="767"/>
    </location>
</feature>
<feature type="topological domain" description="Extracellular" evidence="13">
    <location>
        <begin position="30"/>
        <end position="593"/>
    </location>
</feature>
<feature type="transmembrane region" description="Helical" evidence="3">
    <location>
        <begin position="594"/>
        <end position="614"/>
    </location>
</feature>
<feature type="topological domain" description="Cytoplasmic" evidence="13">
    <location>
        <begin position="615"/>
        <end position="767"/>
    </location>
</feature>
<feature type="domain" description="Cadherin 1" evidence="4">
    <location>
        <begin position="86"/>
        <end position="155"/>
    </location>
</feature>
<feature type="domain" description="Cadherin 2" evidence="4">
    <location>
        <begin position="155"/>
        <end position="261"/>
    </location>
</feature>
<feature type="domain" description="Cadherin 3" evidence="4">
    <location>
        <begin position="262"/>
        <end position="373"/>
    </location>
</feature>
<feature type="domain" description="Cadherin 4" evidence="4">
    <location>
        <begin position="374"/>
        <end position="475"/>
    </location>
</feature>
<feature type="domain" description="Cadherin 5" evidence="4">
    <location>
        <begin position="475"/>
        <end position="581"/>
    </location>
</feature>
<feature type="binding site" evidence="2">
    <location>
        <position position="62"/>
    </location>
    <ligand>
        <name>Ca(2+)</name>
        <dbReference type="ChEBI" id="CHEBI:29108"/>
        <label>1</label>
    </ligand>
</feature>
<feature type="binding site" evidence="2">
    <location>
        <position position="62"/>
    </location>
    <ligand>
        <name>Ca(2+)</name>
        <dbReference type="ChEBI" id="CHEBI:29108"/>
        <label>2</label>
    </ligand>
</feature>
<feature type="binding site" evidence="2">
    <location>
        <position position="63"/>
    </location>
    <ligand>
        <name>Ca(2+)</name>
        <dbReference type="ChEBI" id="CHEBI:29108"/>
        <label>1</label>
    </ligand>
</feature>
<feature type="binding site" evidence="2">
    <location>
        <position position="113"/>
    </location>
    <ligand>
        <name>Ca(2+)</name>
        <dbReference type="ChEBI" id="CHEBI:29108"/>
        <label>1</label>
    </ligand>
</feature>
<feature type="binding site" evidence="2">
    <location>
        <position position="115"/>
    </location>
    <ligand>
        <name>Ca(2+)</name>
        <dbReference type="ChEBI" id="CHEBI:29108"/>
        <label>1</label>
    </ligand>
</feature>
<feature type="binding site" evidence="2">
    <location>
        <position position="115"/>
    </location>
    <ligand>
        <name>Ca(2+)</name>
        <dbReference type="ChEBI" id="CHEBI:29108"/>
        <label>2</label>
    </ligand>
</feature>
<feature type="binding site" evidence="2">
    <location>
        <position position="147"/>
    </location>
    <ligand>
        <name>Ca(2+)</name>
        <dbReference type="ChEBI" id="CHEBI:29108"/>
        <label>2</label>
    </ligand>
</feature>
<feature type="binding site" evidence="2">
    <location>
        <position position="148"/>
    </location>
    <ligand>
        <name>Ca(2+)</name>
        <dbReference type="ChEBI" id="CHEBI:29108"/>
        <label>2</label>
    </ligand>
</feature>
<feature type="binding site" evidence="2">
    <location>
        <position position="149"/>
    </location>
    <ligand>
        <name>Ca(2+)</name>
        <dbReference type="ChEBI" id="CHEBI:29108"/>
        <label>3</label>
    </ligand>
</feature>
<feature type="binding site" evidence="2">
    <location>
        <position position="150"/>
    </location>
    <ligand>
        <name>Ca(2+)</name>
        <dbReference type="ChEBI" id="CHEBI:29108"/>
        <label>1</label>
    </ligand>
</feature>
<feature type="binding site" evidence="2">
    <location>
        <position position="150"/>
    </location>
    <ligand>
        <name>Ca(2+)</name>
        <dbReference type="ChEBI" id="CHEBI:29108"/>
        <label>2</label>
    </ligand>
</feature>
<feature type="binding site" evidence="2">
    <location>
        <position position="151"/>
    </location>
    <ligand>
        <name>Ca(2+)</name>
        <dbReference type="ChEBI" id="CHEBI:29108"/>
        <label>3</label>
    </ligand>
</feature>
<feature type="binding site" evidence="2">
    <location>
        <position position="180"/>
    </location>
    <ligand>
        <name>Ca(2+)</name>
        <dbReference type="ChEBI" id="CHEBI:29108"/>
        <label>3</label>
    </ligand>
</feature>
<feature type="binding site" evidence="2">
    <location>
        <position position="182"/>
    </location>
    <ligand>
        <name>Ca(2+)</name>
        <dbReference type="ChEBI" id="CHEBI:29108"/>
        <label>2</label>
    </ligand>
</feature>
<feature type="binding site" evidence="2">
    <location>
        <position position="182"/>
    </location>
    <ligand>
        <name>Ca(2+)</name>
        <dbReference type="ChEBI" id="CHEBI:29108"/>
        <label>3</label>
    </ligand>
</feature>
<feature type="binding site" evidence="2">
    <location>
        <position position="233"/>
    </location>
    <ligand>
        <name>Ca(2+)</name>
        <dbReference type="ChEBI" id="CHEBI:29108"/>
        <label>3</label>
    </ligand>
</feature>
<feature type="glycosylation site" description="N-linked (GlcNAc...) asparagine" evidence="5">
    <location>
        <position position="121"/>
    </location>
</feature>
<feature type="glycosylation site" description="N-linked (GlcNAc...) asparagine" evidence="5">
    <location>
        <position position="197"/>
    </location>
</feature>
<feature type="glycosylation site" description="N-linked (GlcNAc...) asparagine" evidence="5">
    <location>
        <position position="374"/>
    </location>
</feature>
<feature type="glycosylation site" description="N-linked (GlcNAc...) asparagine" evidence="5">
    <location>
        <position position="477"/>
    </location>
</feature>
<feature type="glycosylation site" description="N-linked (GlcNAc...) asparagine" evidence="5">
    <location>
        <position position="518"/>
    </location>
</feature>
<proteinExistence type="evidence at protein level"/>
<sequence length="767" mass="85415">MMKQCARRQMTEPVFRVAVLLALCSLSIGVDVHQAQKTPSISSAALQRHKRDWKWDKLYAYEETRPKNPPEKIGKLENTFFSSSTRYILKGDGAKDKFGVTDNGDIVVLAKLDRETQSVYNLSASLLNIHTGELVDKDESFVIVVLDINDNIPVFDSDQSGSISESSRAGTTIMKVKATDADDSSTENGRIDFKLLNGTDLFKIKPNGDLIALKSDLDREKQSQYLIAVQAKDMPEHLTGNSATTVVTINIKDINDNIATFKKERYQFTVKEDLKPGSEIGLLEVEDKDEIQNKDPTFALQSKFNDVFDIKRTKEKDGMLSLKVPLDYEKEKTHKFIVIVEEHTVSRTPDNKGLLKRTEVIIDVTDVDEPPIFNQTEYTFSVFEGPFKNPVIGAVSAKDPDSASYKIRYTIEDANCPVDVDPVNGYLSLKRTLDREQESLYTFQVTAHEDVLNGLKSSTMVSLKVLDINDNAPELTNGSYVYVCENDKPNTIIGTIGASDKDENSGRFRFTLARKSSNFSLYDNQDNTATIVLKQGGFSTENSEEYVLEIEIADGGTPEQKSVNLLQIKVCTCQSGRRVEYCMSYARTGMSVSALLAILLCIITILVIVILIVLRRRYQKEVLVTKASGEIHEQLVRYDEEGGGEMDTNGYDVSILSSACHDSSFRPSVGPALYAMVKKPPACKGDMAMMIEVKKDEADRDRDGIPYDTLHIYGYEGTESLAGSLSSLDSSSSGSNLDYDFIHEWGPRFRTLAQLYGVDGSDSDSSY</sequence>
<organism evidence="15">
    <name type="scientific">Danio rerio</name>
    <name type="common">Zebrafish</name>
    <name type="synonym">Brachydanio rerio</name>
    <dbReference type="NCBI Taxonomy" id="7955"/>
    <lineage>
        <taxon>Eukaryota</taxon>
        <taxon>Metazoa</taxon>
        <taxon>Chordata</taxon>
        <taxon>Craniata</taxon>
        <taxon>Vertebrata</taxon>
        <taxon>Euteleostomi</taxon>
        <taxon>Actinopterygii</taxon>
        <taxon>Neopterygii</taxon>
        <taxon>Teleostei</taxon>
        <taxon>Ostariophysi</taxon>
        <taxon>Cypriniformes</taxon>
        <taxon>Danionidae</taxon>
        <taxon>Danioninae</taxon>
        <taxon>Danio</taxon>
    </lineage>
</organism>
<protein>
    <recommendedName>
        <fullName evidence="16">Cadherin-5</fullName>
    </recommendedName>
    <alternativeName>
        <fullName evidence="12">Vascular endothelial cadherin</fullName>
        <shortName evidence="12">VE-cadherin</shortName>
    </alternativeName>
</protein>
<reference evidence="14" key="1">
    <citation type="journal article" date="2004" name="Dev. Dyn.">
        <title>Expression of VE-cadherin in zebrafish embryos: a new tool to evaluate vascular development.</title>
        <authorList>
            <person name="Larson J.D."/>
            <person name="Wadman S.A."/>
            <person name="Chen E."/>
            <person name="Kerley L."/>
            <person name="Clark K.J."/>
            <person name="Eide M."/>
            <person name="Lippert S."/>
            <person name="Nasevicius A."/>
            <person name="Ekker S.C."/>
            <person name="Hackett P.B."/>
            <person name="Essner J.J."/>
        </authorList>
    </citation>
    <scope>NUCLEOTIDE SEQUENCE [MRNA]</scope>
    <scope>DEVELOPMENTAL STAGE</scope>
</reference>
<reference evidence="15" key="2">
    <citation type="journal article" date="2013" name="Nature">
        <title>The zebrafish reference genome sequence and its relationship to the human genome.</title>
        <authorList>
            <person name="Howe K."/>
            <person name="Clark M.D."/>
            <person name="Torroja C.F."/>
            <person name="Torrance J."/>
            <person name="Berthelot C."/>
            <person name="Muffato M."/>
            <person name="Collins J.E."/>
            <person name="Humphray S."/>
            <person name="McLaren K."/>
            <person name="Matthews L."/>
            <person name="McLaren S."/>
            <person name="Sealy I."/>
            <person name="Caccamo M."/>
            <person name="Churcher C."/>
            <person name="Scott C."/>
            <person name="Barrett J.C."/>
            <person name="Koch R."/>
            <person name="Rauch G.J."/>
            <person name="White S."/>
            <person name="Chow W."/>
            <person name="Kilian B."/>
            <person name="Quintais L.T."/>
            <person name="Guerra-Assuncao J.A."/>
            <person name="Zhou Y."/>
            <person name="Gu Y."/>
            <person name="Yen J."/>
            <person name="Vogel J.H."/>
            <person name="Eyre T."/>
            <person name="Redmond S."/>
            <person name="Banerjee R."/>
            <person name="Chi J."/>
            <person name="Fu B."/>
            <person name="Langley E."/>
            <person name="Maguire S.F."/>
            <person name="Laird G.K."/>
            <person name="Lloyd D."/>
            <person name="Kenyon E."/>
            <person name="Donaldson S."/>
            <person name="Sehra H."/>
            <person name="Almeida-King J."/>
            <person name="Loveland J."/>
            <person name="Trevanion S."/>
            <person name="Jones M."/>
            <person name="Quail M."/>
            <person name="Willey D."/>
            <person name="Hunt A."/>
            <person name="Burton J."/>
            <person name="Sims S."/>
            <person name="McLay K."/>
            <person name="Plumb B."/>
            <person name="Davis J."/>
            <person name="Clee C."/>
            <person name="Oliver K."/>
            <person name="Clark R."/>
            <person name="Riddle C."/>
            <person name="Elliot D."/>
            <person name="Threadgold G."/>
            <person name="Harden G."/>
            <person name="Ware D."/>
            <person name="Begum S."/>
            <person name="Mortimore B."/>
            <person name="Kerry G."/>
            <person name="Heath P."/>
            <person name="Phillimore B."/>
            <person name="Tracey A."/>
            <person name="Corby N."/>
            <person name="Dunn M."/>
            <person name="Johnson C."/>
            <person name="Wood J."/>
            <person name="Clark S."/>
            <person name="Pelan S."/>
            <person name="Griffiths G."/>
            <person name="Smith M."/>
            <person name="Glithero R."/>
            <person name="Howden P."/>
            <person name="Barker N."/>
            <person name="Lloyd C."/>
            <person name="Stevens C."/>
            <person name="Harley J."/>
            <person name="Holt K."/>
            <person name="Panagiotidis G."/>
            <person name="Lovell J."/>
            <person name="Beasley H."/>
            <person name="Henderson C."/>
            <person name="Gordon D."/>
            <person name="Auger K."/>
            <person name="Wright D."/>
            <person name="Collins J."/>
            <person name="Raisen C."/>
            <person name="Dyer L."/>
            <person name="Leung K."/>
            <person name="Robertson L."/>
            <person name="Ambridge K."/>
            <person name="Leongamornlert D."/>
            <person name="McGuire S."/>
            <person name="Gilderthorp R."/>
            <person name="Griffiths C."/>
            <person name="Manthravadi D."/>
            <person name="Nichol S."/>
            <person name="Barker G."/>
            <person name="Whitehead S."/>
            <person name="Kay M."/>
            <person name="Brown J."/>
            <person name="Murnane C."/>
            <person name="Gray E."/>
            <person name="Humphries M."/>
            <person name="Sycamore N."/>
            <person name="Barker D."/>
            <person name="Saunders D."/>
            <person name="Wallis J."/>
            <person name="Babbage A."/>
            <person name="Hammond S."/>
            <person name="Mashreghi-Mohammadi M."/>
            <person name="Barr L."/>
            <person name="Martin S."/>
            <person name="Wray P."/>
            <person name="Ellington A."/>
            <person name="Matthews N."/>
            <person name="Ellwood M."/>
            <person name="Woodmansey R."/>
            <person name="Clark G."/>
            <person name="Cooper J."/>
            <person name="Tromans A."/>
            <person name="Grafham D."/>
            <person name="Skuce C."/>
            <person name="Pandian R."/>
            <person name="Andrews R."/>
            <person name="Harrison E."/>
            <person name="Kimberley A."/>
            <person name="Garnett J."/>
            <person name="Fosker N."/>
            <person name="Hall R."/>
            <person name="Garner P."/>
            <person name="Kelly D."/>
            <person name="Bird C."/>
            <person name="Palmer S."/>
            <person name="Gehring I."/>
            <person name="Berger A."/>
            <person name="Dooley C.M."/>
            <person name="Ersan-Urun Z."/>
            <person name="Eser C."/>
            <person name="Geiger H."/>
            <person name="Geisler M."/>
            <person name="Karotki L."/>
            <person name="Kirn A."/>
            <person name="Konantz J."/>
            <person name="Konantz M."/>
            <person name="Oberlander M."/>
            <person name="Rudolph-Geiger S."/>
            <person name="Teucke M."/>
            <person name="Lanz C."/>
            <person name="Raddatz G."/>
            <person name="Osoegawa K."/>
            <person name="Zhu B."/>
            <person name="Rapp A."/>
            <person name="Widaa S."/>
            <person name="Langford C."/>
            <person name="Yang F."/>
            <person name="Schuster S.C."/>
            <person name="Carter N.P."/>
            <person name="Harrow J."/>
            <person name="Ning Z."/>
            <person name="Herrero J."/>
            <person name="Searle S.M."/>
            <person name="Enright A."/>
            <person name="Geisler R."/>
            <person name="Plasterk R.H."/>
            <person name="Lee C."/>
            <person name="Westerfield M."/>
            <person name="de Jong P.J."/>
            <person name="Zon L.I."/>
            <person name="Postlethwait J.H."/>
            <person name="Nusslein-Volhard C."/>
            <person name="Hubbard T.J."/>
            <person name="Roest Crollius H."/>
            <person name="Rogers J."/>
            <person name="Stemple D.L."/>
        </authorList>
    </citation>
    <scope>NUCLEOTIDE SEQUENCE [LARGE SCALE GENOMIC DNA]</scope>
    <source>
        <strain evidence="15">Tuebingen</strain>
    </source>
</reference>
<reference evidence="13" key="3">
    <citation type="journal article" date="2010" name="Development">
        <title>Moesin1 and Ve-cadherin are required in endothelial cells during in vivo tubulogenesis.</title>
        <authorList>
            <person name="Wang Y."/>
            <person name="Kaiser M.S."/>
            <person name="Larson J.D."/>
            <person name="Nasevicius A."/>
            <person name="Clark K.J."/>
            <person name="Wadman S.A."/>
            <person name="Roberg-Perez S.E."/>
            <person name="Ekker S.C."/>
            <person name="Hackett P.B."/>
            <person name="McGrail M."/>
            <person name="Essner J.J."/>
        </authorList>
    </citation>
    <scope>FUNCTION</scope>
    <scope>SUBCELLULAR LOCATION</scope>
    <scope>DEVELOPMENTAL STAGE</scope>
</reference>
<reference evidence="13" key="4">
    <citation type="journal article" date="2010" name="PLoS ONE">
        <title>Effect of vascular cadherin knockdown on zebrafish vasculature during development.</title>
        <authorList>
            <person name="Mitchell I.C."/>
            <person name="Brown T.S."/>
            <person name="Terada L.S."/>
            <person name="Amatruda J.F."/>
            <person name="Nwariaku F.E."/>
        </authorList>
    </citation>
    <scope>FUNCTION</scope>
    <scope>DISRUPTION PHENOTYPE</scope>
</reference>
<reference evidence="13" key="5">
    <citation type="journal article" date="2013" name="Development">
        <title>The zebrafish common cardinal veins develop by a novel mechanism: lumen ensheathment.</title>
        <authorList>
            <person name="Helker C.S."/>
            <person name="Schuermann A."/>
            <person name="Karpanen T."/>
            <person name="Zeuschner D."/>
            <person name="Belting H.G."/>
            <person name="Affolter M."/>
            <person name="Schulte-Merker S."/>
            <person name="Herzog W."/>
        </authorList>
    </citation>
    <scope>FUNCTION</scope>
    <scope>SUBCELLULAR LOCATION</scope>
    <scope>DEVELOPMENTAL STAGE</scope>
    <scope>DISRUPTION PHENOTYPE</scope>
</reference>
<reference evidence="13" key="6">
    <citation type="journal article" date="2014" name="Cell Rep.">
        <title>Cdh5/VE-cadherin promotes endothelial cell interface elongation via cortical actin polymerization during angiogenic sprouting.</title>
        <authorList>
            <person name="Sauteur L."/>
            <person name="Krudewig A."/>
            <person name="Herwig L."/>
            <person name="Ehrenfeuchter N."/>
            <person name="Lenard A."/>
            <person name="Affolter M."/>
            <person name="Belting H.G."/>
        </authorList>
    </citation>
    <scope>FUNCTION</scope>
    <scope>SUBCELLULAR LOCATION</scope>
    <scope>DISRUPTION PHENOTYPE</scope>
</reference>
<gene>
    <name evidence="16" type="primary">cdh5</name>
</gene>
<dbReference type="EMBL" id="AY496430">
    <property type="protein sequence ID" value="AAS75802.1"/>
    <property type="molecule type" value="mRNA"/>
</dbReference>
<dbReference type="RefSeq" id="NP_001003983.1">
    <property type="nucleotide sequence ID" value="NM_001003983.1"/>
</dbReference>
<dbReference type="SMR" id="Q68SP4"/>
<dbReference type="FunCoup" id="Q68SP4">
    <property type="interactions" value="297"/>
</dbReference>
<dbReference type="GeneID" id="445471"/>
<dbReference type="KEGG" id="dre:445471"/>
<dbReference type="AGR" id="ZFIN:ZDB-GENE-040816-1"/>
<dbReference type="CTD" id="1003"/>
<dbReference type="ZFIN" id="ZDB-GENE-040816-1">
    <property type="gene designation" value="cdh5"/>
</dbReference>
<dbReference type="OrthoDB" id="6252479at2759"/>
<dbReference type="PhylomeDB" id="Q68SP4"/>
<dbReference type="Reactome" id="R-DRE-418990">
    <property type="pathway name" value="Adherens junctions interactions"/>
</dbReference>
<dbReference type="Reactome" id="R-DRE-5218920">
    <property type="pathway name" value="VEGFR2 mediated vascular permeability"/>
</dbReference>
<dbReference type="Proteomes" id="UP000000437">
    <property type="component" value="Chromosome 7"/>
</dbReference>
<dbReference type="GO" id="GO:0005912">
    <property type="term" value="C:adherens junction"/>
    <property type="evidence" value="ECO:0000318"/>
    <property type="project" value="GO_Central"/>
</dbReference>
<dbReference type="GO" id="GO:0005923">
    <property type="term" value="C:bicellular tight junction"/>
    <property type="evidence" value="ECO:0000318"/>
    <property type="project" value="GO_Central"/>
</dbReference>
<dbReference type="GO" id="GO:0016342">
    <property type="term" value="C:catenin complex"/>
    <property type="evidence" value="ECO:0000318"/>
    <property type="project" value="GO_Central"/>
</dbReference>
<dbReference type="GO" id="GO:0005911">
    <property type="term" value="C:cell-cell junction"/>
    <property type="evidence" value="ECO:0000314"/>
    <property type="project" value="MGI"/>
</dbReference>
<dbReference type="GO" id="GO:0008013">
    <property type="term" value="F:beta-catenin binding"/>
    <property type="evidence" value="ECO:0000318"/>
    <property type="project" value="GO_Central"/>
</dbReference>
<dbReference type="GO" id="GO:0045296">
    <property type="term" value="F:cadherin binding"/>
    <property type="evidence" value="ECO:0000318"/>
    <property type="project" value="GO_Central"/>
</dbReference>
<dbReference type="GO" id="GO:0005509">
    <property type="term" value="F:calcium ion binding"/>
    <property type="evidence" value="ECO:0007669"/>
    <property type="project" value="InterPro"/>
</dbReference>
<dbReference type="GO" id="GO:0019903">
    <property type="term" value="F:protein phosphatase binding"/>
    <property type="evidence" value="ECO:0000318"/>
    <property type="project" value="GO_Central"/>
</dbReference>
<dbReference type="GO" id="GO:0034332">
    <property type="term" value="P:adherens junction organization"/>
    <property type="evidence" value="ECO:0000318"/>
    <property type="project" value="GO_Central"/>
</dbReference>
<dbReference type="GO" id="GO:0120077">
    <property type="term" value="P:angiogenic sprout fusion"/>
    <property type="evidence" value="ECO:0000315"/>
    <property type="project" value="ZFIN"/>
</dbReference>
<dbReference type="GO" id="GO:1902354">
    <property type="term" value="P:blood vessel endothelial cell delamination involved in blood vessel lumen ensheathment"/>
    <property type="evidence" value="ECO:0000315"/>
    <property type="project" value="ZFIN"/>
</dbReference>
<dbReference type="GO" id="GO:0072554">
    <property type="term" value="P:blood vessel lumenization"/>
    <property type="evidence" value="ECO:0000315"/>
    <property type="project" value="ZFIN"/>
</dbReference>
<dbReference type="GO" id="GO:0016339">
    <property type="term" value="P:calcium-dependent cell-cell adhesion via plasma membrane cell adhesion molecules"/>
    <property type="evidence" value="ECO:0000318"/>
    <property type="project" value="GO_Central"/>
</dbReference>
<dbReference type="GO" id="GO:0120078">
    <property type="term" value="P:cell adhesion involved in sprouting angiogenesis"/>
    <property type="evidence" value="ECO:0000316"/>
    <property type="project" value="ZFIN"/>
</dbReference>
<dbReference type="GO" id="GO:0016477">
    <property type="term" value="P:cell migration"/>
    <property type="evidence" value="ECO:0000318"/>
    <property type="project" value="GO_Central"/>
</dbReference>
<dbReference type="GO" id="GO:0000902">
    <property type="term" value="P:cell morphogenesis"/>
    <property type="evidence" value="ECO:0000318"/>
    <property type="project" value="GO_Central"/>
</dbReference>
<dbReference type="GO" id="GO:0044331">
    <property type="term" value="P:cell-cell adhesion mediated by cadherin"/>
    <property type="evidence" value="ECO:0000318"/>
    <property type="project" value="GO_Central"/>
</dbReference>
<dbReference type="GO" id="GO:0007043">
    <property type="term" value="P:cell-cell junction assembly"/>
    <property type="evidence" value="ECO:0000318"/>
    <property type="project" value="GO_Central"/>
</dbReference>
<dbReference type="GO" id="GO:0045216">
    <property type="term" value="P:cell-cell junction organization"/>
    <property type="evidence" value="ECO:0000315"/>
    <property type="project" value="ZFIN"/>
</dbReference>
<dbReference type="GO" id="GO:0061300">
    <property type="term" value="P:cerebellum vasculature development"/>
    <property type="evidence" value="ECO:0000315"/>
    <property type="project" value="ZFIN"/>
</dbReference>
<dbReference type="GO" id="GO:1902355">
    <property type="term" value="P:endothelial tube lumen extension involved in blood vessel lumen ensheathment"/>
    <property type="evidence" value="ECO:0000315"/>
    <property type="project" value="ZFIN"/>
</dbReference>
<dbReference type="GO" id="GO:0007507">
    <property type="term" value="P:heart development"/>
    <property type="evidence" value="ECO:0000315"/>
    <property type="project" value="ZFIN"/>
</dbReference>
<dbReference type="GO" id="GO:0007156">
    <property type="term" value="P:homophilic cell adhesion via plasma membrane adhesion molecules"/>
    <property type="evidence" value="ECO:0007669"/>
    <property type="project" value="InterPro"/>
</dbReference>
<dbReference type="GO" id="GO:0016525">
    <property type="term" value="P:negative regulation of angiogenesis"/>
    <property type="evidence" value="ECO:0000315"/>
    <property type="project" value="ZFIN"/>
</dbReference>
<dbReference type="GO" id="GO:1901342">
    <property type="term" value="P:regulation of vasculature development"/>
    <property type="evidence" value="ECO:0000316"/>
    <property type="project" value="ZFIN"/>
</dbReference>
<dbReference type="GO" id="GO:0002040">
    <property type="term" value="P:sprouting angiogenesis"/>
    <property type="evidence" value="ECO:0000315"/>
    <property type="project" value="ZFIN"/>
</dbReference>
<dbReference type="GO" id="GO:0009826">
    <property type="term" value="P:unidimensional cell growth"/>
    <property type="evidence" value="ECO:0000315"/>
    <property type="project" value="ZFIN"/>
</dbReference>
<dbReference type="GO" id="GO:0001944">
    <property type="term" value="P:vasculature development"/>
    <property type="evidence" value="ECO:0000316"/>
    <property type="project" value="ZFIN"/>
</dbReference>
<dbReference type="CDD" id="cd11304">
    <property type="entry name" value="Cadherin_repeat"/>
    <property type="match status" value="5"/>
</dbReference>
<dbReference type="FunFam" id="2.60.40.60:FF:000022">
    <property type="entry name" value="Cadherin 2"/>
    <property type="match status" value="1"/>
</dbReference>
<dbReference type="FunFam" id="4.10.900.10:FF:000001">
    <property type="entry name" value="Cadherin 2"/>
    <property type="match status" value="1"/>
</dbReference>
<dbReference type="FunFam" id="2.60.40.60:FF:000450">
    <property type="entry name" value="Cadherin 5"/>
    <property type="match status" value="1"/>
</dbReference>
<dbReference type="FunFam" id="2.60.40.60:FF:000202">
    <property type="entry name" value="cadherin-8 isoform X4"/>
    <property type="match status" value="1"/>
</dbReference>
<dbReference type="FunFam" id="2.60.40.60:FF:000123">
    <property type="entry name" value="Protocadherin beta 4"/>
    <property type="match status" value="1"/>
</dbReference>
<dbReference type="Gene3D" id="2.60.40.60">
    <property type="entry name" value="Cadherins"/>
    <property type="match status" value="5"/>
</dbReference>
<dbReference type="Gene3D" id="4.10.900.10">
    <property type="entry name" value="TCF3-CBD (Catenin binding domain)"/>
    <property type="match status" value="1"/>
</dbReference>
<dbReference type="InterPro" id="IPR039808">
    <property type="entry name" value="Cadherin"/>
</dbReference>
<dbReference type="InterPro" id="IPR002126">
    <property type="entry name" value="Cadherin-like_dom"/>
</dbReference>
<dbReference type="InterPro" id="IPR015919">
    <property type="entry name" value="Cadherin-like_sf"/>
</dbReference>
<dbReference type="InterPro" id="IPR020894">
    <property type="entry name" value="Cadherin_CS"/>
</dbReference>
<dbReference type="InterPro" id="IPR000233">
    <property type="entry name" value="Cadherin_Y-type_LIR"/>
</dbReference>
<dbReference type="InterPro" id="IPR027397">
    <property type="entry name" value="Catenin-bd_sf"/>
</dbReference>
<dbReference type="PANTHER" id="PTHR24027">
    <property type="entry name" value="CADHERIN-23"/>
    <property type="match status" value="1"/>
</dbReference>
<dbReference type="PANTHER" id="PTHR24027:SF89">
    <property type="entry name" value="CADHERIN-5"/>
    <property type="match status" value="1"/>
</dbReference>
<dbReference type="Pfam" id="PF01049">
    <property type="entry name" value="CADH_Y-type_LIR"/>
    <property type="match status" value="1"/>
</dbReference>
<dbReference type="Pfam" id="PF00028">
    <property type="entry name" value="Cadherin"/>
    <property type="match status" value="4"/>
</dbReference>
<dbReference type="PRINTS" id="PR00205">
    <property type="entry name" value="CADHERIN"/>
</dbReference>
<dbReference type="SMART" id="SM00112">
    <property type="entry name" value="CA"/>
    <property type="match status" value="5"/>
</dbReference>
<dbReference type="SUPFAM" id="SSF49313">
    <property type="entry name" value="Cadherin-like"/>
    <property type="match status" value="5"/>
</dbReference>
<dbReference type="PROSITE" id="PS00232">
    <property type="entry name" value="CADHERIN_1"/>
    <property type="match status" value="2"/>
</dbReference>
<dbReference type="PROSITE" id="PS50268">
    <property type="entry name" value="CADHERIN_2"/>
    <property type="match status" value="5"/>
</dbReference>
<evidence type="ECO:0000250" key="1">
    <source>
        <dbReference type="UniProtKB" id="P33151"/>
    </source>
</evidence>
<evidence type="ECO:0000250" key="2">
    <source>
        <dbReference type="UniProtKB" id="Q8AYD0"/>
    </source>
</evidence>
<evidence type="ECO:0000255" key="3"/>
<evidence type="ECO:0000255" key="4">
    <source>
        <dbReference type="PROSITE-ProRule" id="PRU00043"/>
    </source>
</evidence>
<evidence type="ECO:0000255" key="5">
    <source>
        <dbReference type="PROSITE-ProRule" id="PRU00498"/>
    </source>
</evidence>
<evidence type="ECO:0000255" key="6">
    <source>
        <dbReference type="RuleBase" id="RU004357"/>
    </source>
</evidence>
<evidence type="ECO:0000269" key="7">
    <source>
    </source>
</evidence>
<evidence type="ECO:0000269" key="8">
    <source>
    </source>
</evidence>
<evidence type="ECO:0000269" key="9">
    <source>
    </source>
</evidence>
<evidence type="ECO:0000269" key="10">
    <source>
    </source>
</evidence>
<evidence type="ECO:0000269" key="11">
    <source>
    </source>
</evidence>
<evidence type="ECO:0000303" key="12">
    <source>
    </source>
</evidence>
<evidence type="ECO:0000305" key="13"/>
<evidence type="ECO:0000312" key="14">
    <source>
        <dbReference type="EMBL" id="AAS75802.1"/>
    </source>
</evidence>
<evidence type="ECO:0000312" key="15">
    <source>
        <dbReference type="Proteomes" id="UP000000437"/>
    </source>
</evidence>
<evidence type="ECO:0000312" key="16">
    <source>
        <dbReference type="ZFIN" id="ZDB-GENE-040816-1"/>
    </source>
</evidence>
<keyword id="KW-0037">Angiogenesis</keyword>
<keyword id="KW-0106">Calcium</keyword>
<keyword id="KW-0130">Cell adhesion</keyword>
<keyword id="KW-0965">Cell junction</keyword>
<keyword id="KW-1003">Cell membrane</keyword>
<keyword id="KW-0165">Cleavage on pair of basic residues</keyword>
<keyword id="KW-0325">Glycoprotein</keyword>
<keyword id="KW-0472">Membrane</keyword>
<keyword id="KW-0479">Metal-binding</keyword>
<keyword id="KW-1185">Reference proteome</keyword>
<keyword id="KW-0677">Repeat</keyword>
<keyword id="KW-0732">Signal</keyword>
<keyword id="KW-0812">Transmembrane</keyword>
<keyword id="KW-1133">Transmembrane helix</keyword>
<accession>Q68SP4</accession>
<name>CADH5_DANRE</name>
<comment type="function">
    <text evidence="1 6 8 9 10 11">Cadherins are calcium-dependent cell adhesion proteins (By similarity). They preferentially interact with themselves in a homophilic manner in connecting cells; cadherins may thus contribute to the sorting of heterogeneous cell types (By similarity). Required for embryonic cardiac looping and heart chamber development, via promotion of cell-cell junction formation and subsequent attachment between the endothelial and myocardial layers of the heart (PubMed:20098718). Required for the directional migration and delamination of endothelial cell monolayers, by which common cardinal veins form via the lumen ensheathment mechanism of vessel development as they migrate and connect with the heart inflow tract (PubMed:23698350). Required for the formation of filopodia extensions (sprouts) at the initiation of intersegmental vessel development, by acting (via its C-terminus) to facilitate anchoring of the actin cytoskeleton to cell junctions in endothelial cells (PubMed:25373898). Then positively regulates dorsal migration of stalk cells and sprout outgrowth towards the dorsal longitudinal anastomotic vessels (DLAV) via endothelial cell elongation (PubMed:25373898). Following contact with the DLAV, required for intersegmental vessel lumen formation, potentially via facilitating the formation and/or extension of endothelial cell tight junctions that are required during tubulogenesis (PubMed:20736288).</text>
</comment>
<comment type="subcellular location">
    <subcellularLocation>
        <location evidence="3">Cell membrane</location>
        <topology evidence="3">Single-pass type I membrane protein</topology>
    </subcellularLocation>
    <subcellularLocation>
        <location evidence="9 10 11">Cell junction</location>
        <location evidence="9 10 11">Adherens junction</location>
    </subcellularLocation>
</comment>
<comment type="developmental stage">
    <text evidence="7 9 10">Expressed at long junctions that run the length of intersegmental vessels at 30 hpf (at protein level) (PubMed:20736288). Expressed in intersegmental vessels at 54 hpf (at protein level) (PubMed:20736288). Initially expressed in bilateral patches at the edge of anterior and trunk mesoderm at 12 hpf and continues to be expressed as the anterior lateral mesoderm converges to form the symmetric primordia of the anterior vasculature at 18 hpf (PubMed:15305301). Expressed in the embryonic heart by a ring of cells that will develop into the future heart cone at 16 hpf (PubMed:15305301). Expressed in the endothelial cells of the lateral dorsal aorta at 18 hpf (PubMed:23698350). Expressed in the first arteries and veins in the trunk and vessel primordia for the developing brain and eyes at 19 hpf (PubMed:15305301). Expressed in emerging intersegmental sprouts from the tail artery primordium in an anterior-to-posterior pattern as part of the first wave of angiogenesis at 19 hpf (PubMed:15305301). Expressed in the endocardium of the future atrium and ventricle of the heart tube at 26 hpf, expression throughout the endocardium is sustained after the heart has looped at 48 hpf (PubMed:15305301). Expressed by vascular structures throughout the embryo, including intersegmental vessels and dorsal longitudinal anastomotic vessels by 28 hpf, expression continues until at least 2 dpf (PubMed:15305301).</text>
</comment>
<comment type="disruption phenotype">
    <text evidence="8 9 10 11">Disorganization of segmental arteries with supernumerary filopodial extensions that show multiple contacts between neighboring segmental arteries at 28 hpf (PubMed:25373898). Failure of tip cells to organize themselves into the dorsal longitudinal anastomotic vessels with about a third of segments showing dissociation from the stalk, resulting in the stalk cells remaining close to the dorsal aorta at 28 hpf (PubMed:25373898). Stalk cells also show reduced dorsal movement and loss of ability to regain sprouting activity, stalk cells therefore clustered near the dorsal aorta. Loss of endothelial junctional ring elongation along the axis of the forming segmental artery at 26 hpf (PubMed:25373898). The majority of endothelial cell junctions of the segmental arteries are discontinuous in the dorsal region and the distance between longitudinal junctions appears wider at 34 hpf (PubMed:25373898). Cell-cell interface junctional rings are more circular with a significant decrease in surface area (PubMed:25373898). Loss of protrusions that under endogenous conditions are found perpendicular to cell junctions and disruption of the regular meshwork of cortical actin fibers in the segmental artery at 34 hpf (PubMed:25373898). The endothelial cells forming the common cardinal veins fail to delaminate from the migrating monolayer to form a lumen at 36 hpf (PubMed:23698350). Loss of migration directionality of endothelial cell monolayers that form the common cardinal vein lumen upon contact with the endocardial cells of the heart inflow tract at 55 hpf (PubMed:23698350). Morpholino knockdowns show narrow intersegmental vessels that lack visible lumens and discontinuous tight junctions at 54 hpf (PubMed:20736288). Loss of blood circulation in the axial vessels and intersegmental vessels at 56 hpf (PubMed:20736288). Translation-blocking morpholino knockdowns show significant impairment of circulation by 32 hpf, by 48 hpf the atrium of the heart is dilated and circulation is impaired with pooling of erythrocytes and mild pericardial edema (PubMed:20098718). Heart chambers are dilated with an increase in distance between the endocardial and myocardial surfaces and a decrease in density of cardiac jelly in both heart chambers at 48 hpf (PubMed:20098718). Endothelial junctions are smaller, fewer and poorly developed resulting in small gaps between adjacent endothelial cells at 48 hpf (PubMed:20098718). Abnormal folding of cardiac chambers which results in both the atrium and ventricle remaining in the cranio-caudal orientation and significant pericardial edema at 72 hpf (PubMed:20098718). The majority of individuals show circulatory arrest and pericardial edema, with the cardiac chambers and bulbus arteriosus showing a stretched appearance within the pericardium at 96 hpf (PubMed:20098718). Persistent detachment of the endocardial myocardial cell layers in the atrium and elongation of the ventricle walls which are thinner at 96 hpf (PubMed:20098718). Reduces expression of myh7/vmhc in the elongated, tubular cardiac chambers at 96 hpf (PubMed:20098718). Splice-blocking morpholino knockdowns show a similar phenotype of pericardial edema, improper cardiac looping and circulatory arrest at slightly different time points with some individuals failing to initiate circulation at 32 hpf (PubMed:20098718).</text>
</comment>